<name>EFTU_AROAE</name>
<reference key="1">
    <citation type="journal article" date="2005" name="Arch. Microbiol.">
        <title>The genome sequence of an anaerobic aromatic-degrading denitrifying bacterium, strain EbN1.</title>
        <authorList>
            <person name="Rabus R."/>
            <person name="Kube M."/>
            <person name="Heider J."/>
            <person name="Beck A."/>
            <person name="Heitmann K."/>
            <person name="Widdel F."/>
            <person name="Reinhardt R."/>
        </authorList>
    </citation>
    <scope>NUCLEOTIDE SEQUENCE [LARGE SCALE GENOMIC DNA]</scope>
    <source>
        <strain>DSM 19018 / LMG 30748 / EbN1</strain>
    </source>
</reference>
<proteinExistence type="inferred from homology"/>
<comment type="function">
    <text evidence="2">GTP hydrolase that promotes the GTP-dependent binding of aminoacyl-tRNA to the A-site of ribosomes during protein biosynthesis.</text>
</comment>
<comment type="catalytic activity">
    <reaction evidence="2">
        <text>GTP + H2O = GDP + phosphate + H(+)</text>
        <dbReference type="Rhea" id="RHEA:19669"/>
        <dbReference type="ChEBI" id="CHEBI:15377"/>
        <dbReference type="ChEBI" id="CHEBI:15378"/>
        <dbReference type="ChEBI" id="CHEBI:37565"/>
        <dbReference type="ChEBI" id="CHEBI:43474"/>
        <dbReference type="ChEBI" id="CHEBI:58189"/>
        <dbReference type="EC" id="3.6.5.3"/>
    </reaction>
    <physiologicalReaction direction="left-to-right" evidence="2">
        <dbReference type="Rhea" id="RHEA:19670"/>
    </physiologicalReaction>
</comment>
<comment type="subunit">
    <text evidence="2">Monomer.</text>
</comment>
<comment type="subcellular location">
    <subcellularLocation>
        <location evidence="2">Cytoplasm</location>
    </subcellularLocation>
</comment>
<comment type="similarity">
    <text evidence="2">Belongs to the TRAFAC class translation factor GTPase superfamily. Classic translation factor GTPase family. EF-Tu/EF-1A subfamily.</text>
</comment>
<gene>
    <name evidence="2" type="primary">tuf1</name>
    <name type="synonym">tufB</name>
    <name type="ordered locus">AZOSEA21430</name>
</gene>
<gene>
    <name evidence="2" type="primary">tuf2</name>
    <name type="synonym">tufB</name>
    <name type="ordered locus">AZOSEA21550</name>
    <name type="ORF">ebA3808</name>
    <name type="ORF">ebA3826</name>
</gene>
<evidence type="ECO:0000250" key="1"/>
<evidence type="ECO:0000255" key="2">
    <source>
        <dbReference type="HAMAP-Rule" id="MF_00118"/>
    </source>
</evidence>
<accession>Q5P334</accession>
<organism>
    <name type="scientific">Aromatoleum aromaticum (strain DSM 19018 / LMG 30748 / EbN1)</name>
    <name type="common">Azoarcus sp. (strain EbN1)</name>
    <dbReference type="NCBI Taxonomy" id="76114"/>
    <lineage>
        <taxon>Bacteria</taxon>
        <taxon>Pseudomonadati</taxon>
        <taxon>Pseudomonadota</taxon>
        <taxon>Betaproteobacteria</taxon>
        <taxon>Rhodocyclales</taxon>
        <taxon>Rhodocyclaceae</taxon>
        <taxon>Aromatoleum</taxon>
    </lineage>
</organism>
<sequence>MAKGKFERTKPHVNVGTIGHVDHGKTTLTAAITTILSKKFGGEAKAYDQIDAAPEEKARGITINTAHVEYETANRHYAHVDCPGHADYVKNMITGAAQMDGAILVCSAADGPMPQTREHILLARQVGVPYIIVFLNKCDMVDDEELLELVEMEVRELLSKYDFPGDDVPIIKGSALKALEGDQSDIGEPAIFRLAEALDSYIPTPERAIDRPFLLPIEDVFSISGRGTVVTGRVERGIVKVGEEVEIVGIKATVKTTCTGVEMFRKLLDQGQAGDNVGVLLRGTKREDVERGQVLCKPGSIKPHTHFTGEVYVLSKEEGGRHTPFFNNYRPQFYFRTTDVTGSIELPEGTEMVMPGDNVSITVKLMAPIAMEEGLRFAIREGGRTVGAGVVAKIIE</sequence>
<dbReference type="EC" id="3.6.5.3" evidence="2"/>
<dbReference type="EMBL" id="CR555306">
    <property type="protein sequence ID" value="CAI08268.1"/>
    <property type="molecule type" value="Genomic_DNA"/>
</dbReference>
<dbReference type="EMBL" id="CR555306">
    <property type="protein sequence ID" value="CAI08280.1"/>
    <property type="molecule type" value="Genomic_DNA"/>
</dbReference>
<dbReference type="RefSeq" id="WP_011237959.1">
    <property type="nucleotide sequence ID" value="NC_006513.1"/>
</dbReference>
<dbReference type="SMR" id="Q5P334"/>
<dbReference type="STRING" id="76114.ebA3808"/>
<dbReference type="KEGG" id="eba:ebA3808"/>
<dbReference type="KEGG" id="eba:ebA3826"/>
<dbReference type="eggNOG" id="COG0050">
    <property type="taxonomic scope" value="Bacteria"/>
</dbReference>
<dbReference type="HOGENOM" id="CLU_007265_0_0_4"/>
<dbReference type="OrthoDB" id="9803139at2"/>
<dbReference type="Proteomes" id="UP000006552">
    <property type="component" value="Chromosome"/>
</dbReference>
<dbReference type="GO" id="GO:0005829">
    <property type="term" value="C:cytosol"/>
    <property type="evidence" value="ECO:0007669"/>
    <property type="project" value="TreeGrafter"/>
</dbReference>
<dbReference type="GO" id="GO:0005525">
    <property type="term" value="F:GTP binding"/>
    <property type="evidence" value="ECO:0007669"/>
    <property type="project" value="UniProtKB-UniRule"/>
</dbReference>
<dbReference type="GO" id="GO:0003924">
    <property type="term" value="F:GTPase activity"/>
    <property type="evidence" value="ECO:0007669"/>
    <property type="project" value="InterPro"/>
</dbReference>
<dbReference type="GO" id="GO:0097216">
    <property type="term" value="F:guanosine tetraphosphate binding"/>
    <property type="evidence" value="ECO:0007669"/>
    <property type="project" value="UniProtKB-ARBA"/>
</dbReference>
<dbReference type="GO" id="GO:0003746">
    <property type="term" value="F:translation elongation factor activity"/>
    <property type="evidence" value="ECO:0007669"/>
    <property type="project" value="UniProtKB-UniRule"/>
</dbReference>
<dbReference type="CDD" id="cd01884">
    <property type="entry name" value="EF_Tu"/>
    <property type="match status" value="1"/>
</dbReference>
<dbReference type="CDD" id="cd03697">
    <property type="entry name" value="EFTU_II"/>
    <property type="match status" value="1"/>
</dbReference>
<dbReference type="CDD" id="cd03707">
    <property type="entry name" value="EFTU_III"/>
    <property type="match status" value="1"/>
</dbReference>
<dbReference type="FunFam" id="2.40.30.10:FF:000001">
    <property type="entry name" value="Elongation factor Tu"/>
    <property type="match status" value="1"/>
</dbReference>
<dbReference type="FunFam" id="3.40.50.300:FF:000003">
    <property type="entry name" value="Elongation factor Tu"/>
    <property type="match status" value="1"/>
</dbReference>
<dbReference type="Gene3D" id="3.40.50.300">
    <property type="entry name" value="P-loop containing nucleotide triphosphate hydrolases"/>
    <property type="match status" value="1"/>
</dbReference>
<dbReference type="Gene3D" id="2.40.30.10">
    <property type="entry name" value="Translation factors"/>
    <property type="match status" value="2"/>
</dbReference>
<dbReference type="HAMAP" id="MF_00118_B">
    <property type="entry name" value="EF_Tu_B"/>
    <property type="match status" value="1"/>
</dbReference>
<dbReference type="InterPro" id="IPR041709">
    <property type="entry name" value="EF-Tu_GTP-bd"/>
</dbReference>
<dbReference type="InterPro" id="IPR050055">
    <property type="entry name" value="EF-Tu_GTPase"/>
</dbReference>
<dbReference type="InterPro" id="IPR004161">
    <property type="entry name" value="EFTu-like_2"/>
</dbReference>
<dbReference type="InterPro" id="IPR033720">
    <property type="entry name" value="EFTU_2"/>
</dbReference>
<dbReference type="InterPro" id="IPR031157">
    <property type="entry name" value="G_TR_CS"/>
</dbReference>
<dbReference type="InterPro" id="IPR027417">
    <property type="entry name" value="P-loop_NTPase"/>
</dbReference>
<dbReference type="InterPro" id="IPR005225">
    <property type="entry name" value="Small_GTP-bd"/>
</dbReference>
<dbReference type="InterPro" id="IPR000795">
    <property type="entry name" value="T_Tr_GTP-bd_dom"/>
</dbReference>
<dbReference type="InterPro" id="IPR009000">
    <property type="entry name" value="Transl_B-barrel_sf"/>
</dbReference>
<dbReference type="InterPro" id="IPR009001">
    <property type="entry name" value="Transl_elong_EF1A/Init_IF2_C"/>
</dbReference>
<dbReference type="InterPro" id="IPR004541">
    <property type="entry name" value="Transl_elong_EFTu/EF1A_bac/org"/>
</dbReference>
<dbReference type="InterPro" id="IPR004160">
    <property type="entry name" value="Transl_elong_EFTu/EF1A_C"/>
</dbReference>
<dbReference type="NCBIfam" id="TIGR00485">
    <property type="entry name" value="EF-Tu"/>
    <property type="match status" value="1"/>
</dbReference>
<dbReference type="NCBIfam" id="NF000766">
    <property type="entry name" value="PRK00049.1"/>
    <property type="match status" value="1"/>
</dbReference>
<dbReference type="NCBIfam" id="NF009372">
    <property type="entry name" value="PRK12735.1"/>
    <property type="match status" value="1"/>
</dbReference>
<dbReference type="NCBIfam" id="NF009373">
    <property type="entry name" value="PRK12736.1"/>
    <property type="match status" value="1"/>
</dbReference>
<dbReference type="NCBIfam" id="TIGR00231">
    <property type="entry name" value="small_GTP"/>
    <property type="match status" value="1"/>
</dbReference>
<dbReference type="PANTHER" id="PTHR43721:SF22">
    <property type="entry name" value="ELONGATION FACTOR TU, MITOCHONDRIAL"/>
    <property type="match status" value="1"/>
</dbReference>
<dbReference type="PANTHER" id="PTHR43721">
    <property type="entry name" value="ELONGATION FACTOR TU-RELATED"/>
    <property type="match status" value="1"/>
</dbReference>
<dbReference type="Pfam" id="PF00009">
    <property type="entry name" value="GTP_EFTU"/>
    <property type="match status" value="1"/>
</dbReference>
<dbReference type="Pfam" id="PF03144">
    <property type="entry name" value="GTP_EFTU_D2"/>
    <property type="match status" value="1"/>
</dbReference>
<dbReference type="Pfam" id="PF03143">
    <property type="entry name" value="GTP_EFTU_D3"/>
    <property type="match status" value="1"/>
</dbReference>
<dbReference type="PRINTS" id="PR00315">
    <property type="entry name" value="ELONGATNFCT"/>
</dbReference>
<dbReference type="SUPFAM" id="SSF50465">
    <property type="entry name" value="EF-Tu/eEF-1alpha/eIF2-gamma C-terminal domain"/>
    <property type="match status" value="1"/>
</dbReference>
<dbReference type="SUPFAM" id="SSF52540">
    <property type="entry name" value="P-loop containing nucleoside triphosphate hydrolases"/>
    <property type="match status" value="1"/>
</dbReference>
<dbReference type="SUPFAM" id="SSF50447">
    <property type="entry name" value="Translation proteins"/>
    <property type="match status" value="1"/>
</dbReference>
<dbReference type="PROSITE" id="PS00301">
    <property type="entry name" value="G_TR_1"/>
    <property type="match status" value="1"/>
</dbReference>
<dbReference type="PROSITE" id="PS51722">
    <property type="entry name" value="G_TR_2"/>
    <property type="match status" value="1"/>
</dbReference>
<feature type="chain" id="PRO_0000337318" description="Elongation factor Tu">
    <location>
        <begin position="1"/>
        <end position="396"/>
    </location>
</feature>
<feature type="domain" description="tr-type G">
    <location>
        <begin position="10"/>
        <end position="206"/>
    </location>
</feature>
<feature type="region of interest" description="G1" evidence="1">
    <location>
        <begin position="19"/>
        <end position="26"/>
    </location>
</feature>
<feature type="region of interest" description="G2" evidence="1">
    <location>
        <begin position="60"/>
        <end position="64"/>
    </location>
</feature>
<feature type="region of interest" description="G3" evidence="1">
    <location>
        <begin position="81"/>
        <end position="84"/>
    </location>
</feature>
<feature type="region of interest" description="G4" evidence="1">
    <location>
        <begin position="136"/>
        <end position="139"/>
    </location>
</feature>
<feature type="region of interest" description="G5" evidence="1">
    <location>
        <begin position="174"/>
        <end position="176"/>
    </location>
</feature>
<feature type="binding site" evidence="2">
    <location>
        <begin position="19"/>
        <end position="26"/>
    </location>
    <ligand>
        <name>GTP</name>
        <dbReference type="ChEBI" id="CHEBI:37565"/>
    </ligand>
</feature>
<feature type="binding site" evidence="2">
    <location>
        <position position="26"/>
    </location>
    <ligand>
        <name>Mg(2+)</name>
        <dbReference type="ChEBI" id="CHEBI:18420"/>
    </ligand>
</feature>
<feature type="binding site" evidence="2">
    <location>
        <begin position="81"/>
        <end position="85"/>
    </location>
    <ligand>
        <name>GTP</name>
        <dbReference type="ChEBI" id="CHEBI:37565"/>
    </ligand>
</feature>
<feature type="binding site" evidence="2">
    <location>
        <begin position="136"/>
        <end position="139"/>
    </location>
    <ligand>
        <name>GTP</name>
        <dbReference type="ChEBI" id="CHEBI:37565"/>
    </ligand>
</feature>
<protein>
    <recommendedName>
        <fullName evidence="2">Elongation factor Tu</fullName>
        <shortName evidence="2">EF-Tu</shortName>
        <ecNumber evidence="2">3.6.5.3</ecNumber>
    </recommendedName>
</protein>
<keyword id="KW-0963">Cytoplasm</keyword>
<keyword id="KW-0251">Elongation factor</keyword>
<keyword id="KW-0342">GTP-binding</keyword>
<keyword id="KW-0378">Hydrolase</keyword>
<keyword id="KW-0460">Magnesium</keyword>
<keyword id="KW-0479">Metal-binding</keyword>
<keyword id="KW-0547">Nucleotide-binding</keyword>
<keyword id="KW-0648">Protein biosynthesis</keyword>
<keyword id="KW-1185">Reference proteome</keyword>